<gene>
    <name evidence="1" type="primary">nuoD</name>
    <name type="ordered locus">NIS_0291</name>
</gene>
<comment type="function">
    <text evidence="1">NDH-1 shuttles electrons from NADH, via FMN and iron-sulfur (Fe-S) centers, to quinones in the respiratory chain. The immediate electron acceptor for the enzyme in this species is believed to be ubiquinone. Couples the redox reaction to proton translocation (for every two electrons transferred, four hydrogen ions are translocated across the cytoplasmic membrane), and thus conserves the redox energy in a proton gradient.</text>
</comment>
<comment type="catalytic activity">
    <reaction evidence="1">
        <text>a quinone + NADH + 5 H(+)(in) = a quinol + NAD(+) + 4 H(+)(out)</text>
        <dbReference type="Rhea" id="RHEA:57888"/>
        <dbReference type="ChEBI" id="CHEBI:15378"/>
        <dbReference type="ChEBI" id="CHEBI:24646"/>
        <dbReference type="ChEBI" id="CHEBI:57540"/>
        <dbReference type="ChEBI" id="CHEBI:57945"/>
        <dbReference type="ChEBI" id="CHEBI:132124"/>
    </reaction>
</comment>
<comment type="subunit">
    <text evidence="1">NDH-1 is composed of 14 different subunits. Subunits NuoB, C, D, E, F, and G constitute the peripheral sector of the complex.</text>
</comment>
<comment type="subcellular location">
    <subcellularLocation>
        <location evidence="1">Cell inner membrane</location>
        <topology evidence="1">Peripheral membrane protein</topology>
        <orientation evidence="1">Cytoplasmic side</orientation>
    </subcellularLocation>
</comment>
<comment type="similarity">
    <text evidence="1">Belongs to the complex I 49 kDa subunit family.</text>
</comment>
<evidence type="ECO:0000255" key="1">
    <source>
        <dbReference type="HAMAP-Rule" id="MF_01358"/>
    </source>
</evidence>
<proteinExistence type="inferred from homology"/>
<dbReference type="EC" id="7.1.1.-" evidence="1"/>
<dbReference type="EMBL" id="AP009178">
    <property type="protein sequence ID" value="BAF69405.1"/>
    <property type="molecule type" value="Genomic_DNA"/>
</dbReference>
<dbReference type="RefSeq" id="WP_012081668.1">
    <property type="nucleotide sequence ID" value="NC_009662.1"/>
</dbReference>
<dbReference type="SMR" id="A6Q1P6"/>
<dbReference type="FunCoup" id="A6Q1P6">
    <property type="interactions" value="294"/>
</dbReference>
<dbReference type="STRING" id="387092.NIS_0291"/>
<dbReference type="KEGG" id="nis:NIS_0291"/>
<dbReference type="eggNOG" id="COG0649">
    <property type="taxonomic scope" value="Bacteria"/>
</dbReference>
<dbReference type="HOGENOM" id="CLU_015134_1_2_7"/>
<dbReference type="InParanoid" id="A6Q1P6"/>
<dbReference type="OrthoDB" id="9801496at2"/>
<dbReference type="Proteomes" id="UP000001118">
    <property type="component" value="Chromosome"/>
</dbReference>
<dbReference type="GO" id="GO:0005886">
    <property type="term" value="C:plasma membrane"/>
    <property type="evidence" value="ECO:0007669"/>
    <property type="project" value="UniProtKB-SubCell"/>
</dbReference>
<dbReference type="GO" id="GO:0051287">
    <property type="term" value="F:NAD binding"/>
    <property type="evidence" value="ECO:0007669"/>
    <property type="project" value="InterPro"/>
</dbReference>
<dbReference type="GO" id="GO:0050136">
    <property type="term" value="F:NADH:ubiquinone reductase (non-electrogenic) activity"/>
    <property type="evidence" value="ECO:0007669"/>
    <property type="project" value="UniProtKB-UniRule"/>
</dbReference>
<dbReference type="GO" id="GO:0048038">
    <property type="term" value="F:quinone binding"/>
    <property type="evidence" value="ECO:0007669"/>
    <property type="project" value="UniProtKB-KW"/>
</dbReference>
<dbReference type="Gene3D" id="1.10.645.10">
    <property type="entry name" value="Cytochrome-c3 Hydrogenase, chain B"/>
    <property type="match status" value="1"/>
</dbReference>
<dbReference type="HAMAP" id="MF_01358">
    <property type="entry name" value="NDH1_NuoD"/>
    <property type="match status" value="1"/>
</dbReference>
<dbReference type="InterPro" id="IPR001135">
    <property type="entry name" value="NADH_Q_OxRdtase_suD"/>
</dbReference>
<dbReference type="InterPro" id="IPR022885">
    <property type="entry name" value="NDH1_su_D/H"/>
</dbReference>
<dbReference type="InterPro" id="IPR029014">
    <property type="entry name" value="NiFe-Hase_large"/>
</dbReference>
<dbReference type="NCBIfam" id="TIGR01962">
    <property type="entry name" value="NuoD"/>
    <property type="match status" value="1"/>
</dbReference>
<dbReference type="NCBIfam" id="NF004739">
    <property type="entry name" value="PRK06075.1"/>
    <property type="match status" value="1"/>
</dbReference>
<dbReference type="PANTHER" id="PTHR11993:SF10">
    <property type="entry name" value="NADH DEHYDROGENASE [UBIQUINONE] IRON-SULFUR PROTEIN 2, MITOCHONDRIAL"/>
    <property type="match status" value="1"/>
</dbReference>
<dbReference type="PANTHER" id="PTHR11993">
    <property type="entry name" value="NADH-UBIQUINONE OXIDOREDUCTASE 49 KDA SUBUNIT"/>
    <property type="match status" value="1"/>
</dbReference>
<dbReference type="Pfam" id="PF00346">
    <property type="entry name" value="Complex1_49kDa"/>
    <property type="match status" value="1"/>
</dbReference>
<dbReference type="SUPFAM" id="SSF56762">
    <property type="entry name" value="HydB/Nqo4-like"/>
    <property type="match status" value="1"/>
</dbReference>
<reference key="1">
    <citation type="journal article" date="2007" name="Proc. Natl. Acad. Sci. U.S.A.">
        <title>Deep-sea vent epsilon-proteobacterial genomes provide insights into emergence of pathogens.</title>
        <authorList>
            <person name="Nakagawa S."/>
            <person name="Takaki Y."/>
            <person name="Shimamura S."/>
            <person name="Reysenbach A.-L."/>
            <person name="Takai K."/>
            <person name="Horikoshi K."/>
        </authorList>
    </citation>
    <scope>NUCLEOTIDE SEQUENCE [LARGE SCALE GENOMIC DNA]</scope>
    <source>
        <strain>SB155-2</strain>
    </source>
</reference>
<organism>
    <name type="scientific">Nitratiruptor sp. (strain SB155-2)</name>
    <dbReference type="NCBI Taxonomy" id="387092"/>
    <lineage>
        <taxon>Bacteria</taxon>
        <taxon>Pseudomonadati</taxon>
        <taxon>Campylobacterota</taxon>
        <taxon>Epsilonproteobacteria</taxon>
        <taxon>Nautiliales</taxon>
        <taxon>Nitratiruptoraceae</taxon>
        <taxon>Nitratiruptor</taxon>
    </lineage>
</organism>
<protein>
    <recommendedName>
        <fullName evidence="1">NADH-quinone oxidoreductase subunit D</fullName>
        <ecNumber evidence="1">7.1.1.-</ecNumber>
    </recommendedName>
    <alternativeName>
        <fullName evidence="1">NADH dehydrogenase I subunit D</fullName>
    </alternativeName>
    <alternativeName>
        <fullName evidence="1">NDH-1 subunit D</fullName>
    </alternativeName>
</protein>
<accession>A6Q1P6</accession>
<feature type="chain" id="PRO_0000371892" description="NADH-quinone oxidoreductase subunit D">
    <location>
        <begin position="1"/>
        <end position="410"/>
    </location>
</feature>
<keyword id="KW-0997">Cell inner membrane</keyword>
<keyword id="KW-1003">Cell membrane</keyword>
<keyword id="KW-0472">Membrane</keyword>
<keyword id="KW-0520">NAD</keyword>
<keyword id="KW-0874">Quinone</keyword>
<keyword id="KW-1185">Reference proteome</keyword>
<keyword id="KW-1278">Translocase</keyword>
<keyword id="KW-0813">Transport</keyword>
<keyword id="KW-0830">Ubiquinone</keyword>
<name>NUOD_NITSB</name>
<sequence>MQQRNRLEPYFENLVFERDDNKMVVNFGPQHPSAHGQLRLILEMDGEQITKAVPDIGYLHRGMEKMGENMIYNEFLPTTDRMDYIAATSNNYAFALAVERLLGIEDKVPRRAKVIRMILLELNRIISHLFWLATHALDVGAMSVFLYCFREREYAMDLIEDYCGARLTHSSVRIGGVPLDLPEGWLDRLNVYLNNLPDQIKLYEGLLTENRIWRMRLEEVGVIPPEMAKQWACSGIMLRGSGIEYDIRKEEPYELYDEVDFDIPVSDRCDSYGRYLLYMEEMRQSIRIIRQLIPMYKETEPQLMAHAPEYISAHKEDIMTQNYSLMQHFVLVTQGMRPPVGEVYVPTESPKGELGFFIRSEGEPYPYRLKIRAPSFWHTGILQDLLPGHYLADVVTIIGSTNIVFGEIDR</sequence>